<proteinExistence type="inferred from homology"/>
<sequence>MKSLSLLALAAIAPPAAVAAVVDRQVPFENRPVQGLPEKFLIQLGPEQTRWVTEDEKWALKMEGVNFFDITAEPDRGFSAKSHERIQVSFPSEVKHQTELAPLLEQLSKDNMRQNLVHFTSFHTRYYKSETGVQSATWLFEQVEEAIQDSGAAQHAVKVERFEHSWGQFSIIATIPGRTNKTVVIGAHQDSINLFLPSILPAPGADDDGSGTVTILEAFRVLLQSEAVQQGNAANTIEFHWYSAEEAGLLGSQAIFSDYSKTGRDIKAMLQQDMTGYVEGTTKAGEVESVGVITDFVDPGLTEFIKRVITGYCTIPFVLTQCGYACSDHASASRYGYPSAFVIESEFKRSNQRIHTTGDTVDLLSFDHMLQHARMTLAFAYELAFAEL</sequence>
<comment type="function">
    <text evidence="1">Extracellular aminopeptidase that allows assimilation of proteinaceous substrates.</text>
</comment>
<comment type="cofactor">
    <cofactor evidence="1">
        <name>Zn(2+)</name>
        <dbReference type="ChEBI" id="CHEBI:29105"/>
    </cofactor>
    <text evidence="1">Binds 2 Zn(2+) ions per subunit.</text>
</comment>
<comment type="subunit">
    <text evidence="1">Monomer.</text>
</comment>
<comment type="subcellular location">
    <subcellularLocation>
        <location evidence="1">Secreted</location>
    </subcellularLocation>
</comment>
<comment type="similarity">
    <text evidence="3">Belongs to the peptidase M28 family. M28E subfamily.</text>
</comment>
<gene>
    <name type="primary">LAP1</name>
    <name type="ORF">CPC735_031780</name>
</gene>
<evidence type="ECO:0000250" key="1"/>
<evidence type="ECO:0000255" key="2"/>
<evidence type="ECO:0000305" key="3"/>
<keyword id="KW-0031">Aminopeptidase</keyword>
<keyword id="KW-1015">Disulfide bond</keyword>
<keyword id="KW-0325">Glycoprotein</keyword>
<keyword id="KW-0378">Hydrolase</keyword>
<keyword id="KW-0479">Metal-binding</keyword>
<keyword id="KW-0645">Protease</keyword>
<keyword id="KW-0964">Secreted</keyword>
<keyword id="KW-0732">Signal</keyword>
<keyword id="KW-0862">Zinc</keyword>
<keyword id="KW-0865">Zymogen</keyword>
<accession>C5P552</accession>
<reference key="1">
    <citation type="journal article" date="2009" name="Genome Res.">
        <title>Comparative genomic analyses of the human fungal pathogens Coccidioides and their relatives.</title>
        <authorList>
            <person name="Sharpton T.J."/>
            <person name="Stajich J.E."/>
            <person name="Rounsley S.D."/>
            <person name="Gardner M.J."/>
            <person name="Wortman J.R."/>
            <person name="Jordar V.S."/>
            <person name="Maiti R."/>
            <person name="Kodira C.D."/>
            <person name="Neafsey D.E."/>
            <person name="Zeng Q."/>
            <person name="Hung C.-Y."/>
            <person name="McMahan C."/>
            <person name="Muszewska A."/>
            <person name="Grynberg M."/>
            <person name="Mandel M.A."/>
            <person name="Kellner E.M."/>
            <person name="Barker B.M."/>
            <person name="Galgiani J.N."/>
            <person name="Orbach M.J."/>
            <person name="Kirkland T.N."/>
            <person name="Cole G.T."/>
            <person name="Henn M.R."/>
            <person name="Birren B.W."/>
            <person name="Taylor J.W."/>
        </authorList>
    </citation>
    <scope>NUCLEOTIDE SEQUENCE [LARGE SCALE GENOMIC DNA]</scope>
    <source>
        <strain>C735</strain>
    </source>
</reference>
<organism>
    <name type="scientific">Coccidioides posadasii (strain C735)</name>
    <name type="common">Valley fever fungus</name>
    <dbReference type="NCBI Taxonomy" id="222929"/>
    <lineage>
        <taxon>Eukaryota</taxon>
        <taxon>Fungi</taxon>
        <taxon>Dikarya</taxon>
        <taxon>Ascomycota</taxon>
        <taxon>Pezizomycotina</taxon>
        <taxon>Eurotiomycetes</taxon>
        <taxon>Eurotiomycetidae</taxon>
        <taxon>Onygenales</taxon>
        <taxon>Onygenaceae</taxon>
        <taxon>Coccidioides</taxon>
    </lineage>
</organism>
<name>LAP1_COCP7</name>
<feature type="signal peptide" evidence="2">
    <location>
        <begin position="1"/>
        <end position="19"/>
    </location>
</feature>
<feature type="propeptide" id="PRO_0000412401" evidence="1">
    <location>
        <begin position="20"/>
        <end position="88"/>
    </location>
</feature>
<feature type="chain" id="PRO_0000412402" description="Leucine aminopeptidase 1">
    <location>
        <begin position="89"/>
        <end position="388"/>
    </location>
</feature>
<feature type="binding site" evidence="1">
    <location>
        <position position="188"/>
    </location>
    <ligand>
        <name>Zn(2+)</name>
        <dbReference type="ChEBI" id="CHEBI:29105"/>
        <label>1</label>
    </ligand>
</feature>
<feature type="binding site" evidence="1">
    <location>
        <position position="207"/>
    </location>
    <ligand>
        <name>Zn(2+)</name>
        <dbReference type="ChEBI" id="CHEBI:29105"/>
        <label>1</label>
    </ligand>
</feature>
<feature type="binding site" evidence="1">
    <location>
        <position position="207"/>
    </location>
    <ligand>
        <name>Zn(2+)</name>
        <dbReference type="ChEBI" id="CHEBI:29105"/>
        <label>2</label>
        <note>catalytic</note>
    </ligand>
</feature>
<feature type="binding site" evidence="1">
    <location>
        <position position="246"/>
    </location>
    <ligand>
        <name>Zn(2+)</name>
        <dbReference type="ChEBI" id="CHEBI:29105"/>
        <label>2</label>
        <note>catalytic</note>
    </ligand>
</feature>
<feature type="binding site" evidence="1">
    <location>
        <position position="273"/>
    </location>
    <ligand>
        <name>Zn(2+)</name>
        <dbReference type="ChEBI" id="CHEBI:29105"/>
        <label>1</label>
    </ligand>
</feature>
<feature type="binding site" evidence="1">
    <location>
        <position position="355"/>
    </location>
    <ligand>
        <name>Zn(2+)</name>
        <dbReference type="ChEBI" id="CHEBI:29105"/>
        <label>2</label>
        <note>catalytic</note>
    </ligand>
</feature>
<feature type="glycosylation site" description="N-linked (GlcNAc...) asparagine" evidence="2">
    <location>
        <position position="180"/>
    </location>
</feature>
<feature type="disulfide bond" evidence="1">
    <location>
        <begin position="322"/>
        <end position="326"/>
    </location>
</feature>
<protein>
    <recommendedName>
        <fullName>Leucine aminopeptidase 1</fullName>
        <ecNumber>3.4.11.-</ecNumber>
    </recommendedName>
    <alternativeName>
        <fullName>Leucyl aminopeptidase 1</fullName>
        <shortName>LAP1</shortName>
    </alternativeName>
</protein>
<dbReference type="EC" id="3.4.11.-"/>
<dbReference type="EMBL" id="ACFW01000025">
    <property type="protein sequence ID" value="EER27842.1"/>
    <property type="molecule type" value="Genomic_DNA"/>
</dbReference>
<dbReference type="RefSeq" id="XP_003069987.1">
    <property type="nucleotide sequence ID" value="XM_003069941.1"/>
</dbReference>
<dbReference type="SMR" id="C5P552"/>
<dbReference type="MEROPS" id="M28.022"/>
<dbReference type="GlyCosmos" id="C5P552">
    <property type="glycosylation" value="1 site, No reported glycans"/>
</dbReference>
<dbReference type="KEGG" id="cpw:9695482"/>
<dbReference type="VEuPathDB" id="FungiDB:CPC735_031780"/>
<dbReference type="HOGENOM" id="CLU_025866_0_0_1"/>
<dbReference type="OrthoDB" id="2214at2759"/>
<dbReference type="Proteomes" id="UP000009084">
    <property type="component" value="Unassembled WGS sequence"/>
</dbReference>
<dbReference type="GO" id="GO:0005576">
    <property type="term" value="C:extracellular region"/>
    <property type="evidence" value="ECO:0007669"/>
    <property type="project" value="UniProtKB-SubCell"/>
</dbReference>
<dbReference type="GO" id="GO:0004177">
    <property type="term" value="F:aminopeptidase activity"/>
    <property type="evidence" value="ECO:0007669"/>
    <property type="project" value="UniProtKB-KW"/>
</dbReference>
<dbReference type="GO" id="GO:0046872">
    <property type="term" value="F:metal ion binding"/>
    <property type="evidence" value="ECO:0007669"/>
    <property type="project" value="UniProtKB-KW"/>
</dbReference>
<dbReference type="GO" id="GO:0008235">
    <property type="term" value="F:metalloexopeptidase activity"/>
    <property type="evidence" value="ECO:0007669"/>
    <property type="project" value="InterPro"/>
</dbReference>
<dbReference type="GO" id="GO:0006508">
    <property type="term" value="P:proteolysis"/>
    <property type="evidence" value="ECO:0007669"/>
    <property type="project" value="UniProtKB-KW"/>
</dbReference>
<dbReference type="CDD" id="cd03879">
    <property type="entry name" value="M28_AAP"/>
    <property type="match status" value="1"/>
</dbReference>
<dbReference type="FunFam" id="3.40.630.10:FF:000042">
    <property type="entry name" value="Peptide hydrolase"/>
    <property type="match status" value="1"/>
</dbReference>
<dbReference type="Gene3D" id="3.40.630.10">
    <property type="entry name" value="Zn peptidases"/>
    <property type="match status" value="1"/>
</dbReference>
<dbReference type="InterPro" id="IPR045175">
    <property type="entry name" value="M28_fam"/>
</dbReference>
<dbReference type="InterPro" id="IPR007484">
    <property type="entry name" value="Peptidase_M28"/>
</dbReference>
<dbReference type="PANTHER" id="PTHR12147:SF56">
    <property type="entry name" value="AMINOPEPTIDASE YDR415C-RELATED"/>
    <property type="match status" value="1"/>
</dbReference>
<dbReference type="PANTHER" id="PTHR12147">
    <property type="entry name" value="METALLOPEPTIDASE M28 FAMILY MEMBER"/>
    <property type="match status" value="1"/>
</dbReference>
<dbReference type="Pfam" id="PF04389">
    <property type="entry name" value="Peptidase_M28"/>
    <property type="match status" value="1"/>
</dbReference>
<dbReference type="SUPFAM" id="SSF53187">
    <property type="entry name" value="Zn-dependent exopeptidases"/>
    <property type="match status" value="1"/>
</dbReference>